<sequence length="474" mass="53558">MDRNPSPPPPGRDKEEEEEVAGGDCIGSTVYSKHWLFGVLSGLIQIVSPENTKSSSDDEEQLTELDEEMENEICRVWDMSMDEDVALFLQEFNAPDIFMGVLAKSKCPRLREICVGILGNMACFQEICVSISSDKNLGQVLLHCLYDSDPPTLLETSRLLLTCLSQAEVASVWVERIQEHPAIYDSICFIMSSSTNVDLLVKVGEVVDKLFDLDEKLMLEWVRNGAAQPLDQPQEESEEQPVFRLVPCILEAAKQVRSENPEWLDVYMHILQLLTTVDDGIQAIVHCPDTGKDIWNLLFDLVCHEFCQSDDPPIILQEQKTVLASVFSVLSAIYASQTEQEYLKIEKVDLPLIDSLIRVLQNMEQCQKKPENSAESNTEETKRTDLTQDDFHLKILKDILCEFLSNIFQALTKETVAQGVKEGQLSKQKCSSAFQNLLPFYSPVVEDFIKILREVDKALADDLEKNFPSLKVQT</sequence>
<reference key="1">
    <citation type="journal article" date="2006" name="Nature">
        <title>Human chromosome 11 DNA sequence and analysis including novel gene identification.</title>
        <authorList>
            <person name="Taylor T.D."/>
            <person name="Noguchi H."/>
            <person name="Totoki Y."/>
            <person name="Toyoda A."/>
            <person name="Kuroki Y."/>
            <person name="Dewar K."/>
            <person name="Lloyd C."/>
            <person name="Itoh T."/>
            <person name="Takeda T."/>
            <person name="Kim D.-W."/>
            <person name="She X."/>
            <person name="Barlow K.F."/>
            <person name="Bloom T."/>
            <person name="Bruford E."/>
            <person name="Chang J.L."/>
            <person name="Cuomo C.A."/>
            <person name="Eichler E."/>
            <person name="FitzGerald M.G."/>
            <person name="Jaffe D.B."/>
            <person name="LaButti K."/>
            <person name="Nicol R."/>
            <person name="Park H.-S."/>
            <person name="Seaman C."/>
            <person name="Sougnez C."/>
            <person name="Yang X."/>
            <person name="Zimmer A.R."/>
            <person name="Zody M.C."/>
            <person name="Birren B.W."/>
            <person name="Nusbaum C."/>
            <person name="Fujiyama A."/>
            <person name="Hattori M."/>
            <person name="Rogers J."/>
            <person name="Lander E.S."/>
            <person name="Sakaki Y."/>
        </authorList>
    </citation>
    <scope>NUCLEOTIDE SEQUENCE [LARGE SCALE GENOMIC DNA]</scope>
</reference>
<reference key="2">
    <citation type="submission" date="2005-09" db="EMBL/GenBank/DDBJ databases">
        <authorList>
            <person name="Mural R.J."/>
            <person name="Istrail S."/>
            <person name="Sutton G.G."/>
            <person name="Florea L."/>
            <person name="Halpern A.L."/>
            <person name="Mobarry C.M."/>
            <person name="Lippert R."/>
            <person name="Walenz B."/>
            <person name="Shatkay H."/>
            <person name="Dew I."/>
            <person name="Miller J.R."/>
            <person name="Flanigan M.J."/>
            <person name="Edwards N.J."/>
            <person name="Bolanos R."/>
            <person name="Fasulo D."/>
            <person name="Halldorsson B.V."/>
            <person name="Hannenhalli S."/>
            <person name="Turner R."/>
            <person name="Yooseph S."/>
            <person name="Lu F."/>
            <person name="Nusskern D.R."/>
            <person name="Shue B.C."/>
            <person name="Zheng X.H."/>
            <person name="Zhong F."/>
            <person name="Delcher A.L."/>
            <person name="Huson D.H."/>
            <person name="Kravitz S.A."/>
            <person name="Mouchard L."/>
            <person name="Reinert K."/>
            <person name="Remington K.A."/>
            <person name="Clark A.G."/>
            <person name="Waterman M.S."/>
            <person name="Eichler E.E."/>
            <person name="Adams M.D."/>
            <person name="Hunkapiller M.W."/>
            <person name="Myers E.W."/>
            <person name="Venter J.C."/>
        </authorList>
    </citation>
    <scope>NUCLEOTIDE SEQUENCE [LARGE SCALE GENOMIC DNA]</scope>
</reference>
<reference key="3">
    <citation type="journal article" date="2004" name="Genome Res.">
        <title>The status, quality, and expansion of the NIH full-length cDNA project: the Mammalian Gene Collection (MGC).</title>
        <authorList>
            <consortium name="The MGC Project Team"/>
        </authorList>
    </citation>
    <scope>NUCLEOTIDE SEQUENCE [LARGE SCALE MRNA]</scope>
    <source>
        <tissue>Liver</tissue>
    </source>
</reference>
<reference key="4">
    <citation type="journal article" date="2007" name="Science">
        <title>ATM and ATR substrate analysis reveals extensive protein networks responsive to DNA damage.</title>
        <authorList>
            <person name="Matsuoka S."/>
            <person name="Ballif B.A."/>
            <person name="Smogorzewska A."/>
            <person name="McDonald E.R. III"/>
            <person name="Hurov K.E."/>
            <person name="Luo J."/>
            <person name="Bakalarski C.E."/>
            <person name="Zhao Z."/>
            <person name="Solimini N."/>
            <person name="Lerenthal Y."/>
            <person name="Shiloh Y."/>
            <person name="Gygi S.P."/>
            <person name="Elledge S.J."/>
        </authorList>
    </citation>
    <scope>PHOSPHORYLATION [LARGE SCALE ANALYSIS] AT THR-387</scope>
    <scope>IDENTIFICATION BY MASS SPECTROMETRY [LARGE SCALE ANALYSIS]</scope>
    <source>
        <tissue>Embryonic kidney</tissue>
    </source>
</reference>
<reference key="5">
    <citation type="journal article" date="2008" name="Proc. Natl. Acad. Sci. U.S.A.">
        <title>A quantitative atlas of mitotic phosphorylation.</title>
        <authorList>
            <person name="Dephoure N."/>
            <person name="Zhou C."/>
            <person name="Villen J."/>
            <person name="Beausoleil S.A."/>
            <person name="Bakalarski C.E."/>
            <person name="Elledge S.J."/>
            <person name="Gygi S.P."/>
        </authorList>
    </citation>
    <scope>IDENTIFICATION BY MASS SPECTROMETRY [LARGE SCALE ANALYSIS]</scope>
    <source>
        <tissue>Cervix carcinoma</tissue>
    </source>
</reference>
<reference key="6">
    <citation type="journal article" date="2009" name="Sci. Signal.">
        <title>Quantitative phosphoproteomic analysis of T cell receptor signaling reveals system-wide modulation of protein-protein interactions.</title>
        <authorList>
            <person name="Mayya V."/>
            <person name="Lundgren D.H."/>
            <person name="Hwang S.-I."/>
            <person name="Rezaul K."/>
            <person name="Wu L."/>
            <person name="Eng J.K."/>
            <person name="Rodionov V."/>
            <person name="Han D.K."/>
        </authorList>
    </citation>
    <scope>IDENTIFICATION BY MASS SPECTROMETRY [LARGE SCALE ANALYSIS]</scope>
    <source>
        <tissue>Leukemic T-cell</tissue>
    </source>
</reference>
<reference key="7">
    <citation type="journal article" date="2011" name="Arthritis Rheum.">
        <title>Overexpression of SPACIA1/SAAL1, a newly identified gene that is involved in synoviocyte proliferation, accelerates the progression of synovitis in mice and humans.</title>
        <authorList>
            <person name="Sato T."/>
            <person name="Fujii R."/>
            <person name="Konomi K."/>
            <person name="Yagishita N."/>
            <person name="Aratani S."/>
            <person name="Araya N."/>
            <person name="Aono H."/>
            <person name="Yudoh K."/>
            <person name="Suzuki N."/>
            <person name="Beppu M."/>
            <person name="Yamano Y."/>
            <person name="Nishioka K."/>
            <person name="Nakajima T."/>
        </authorList>
    </citation>
    <scope>FUNCTION</scope>
    <scope>SUBCELLULAR LOCATION</scope>
    <scope>TISSUE SPECIFICITY</scope>
</reference>
<reference key="8">
    <citation type="journal article" date="2011" name="BMC Syst. Biol.">
        <title>Initial characterization of the human central proteome.</title>
        <authorList>
            <person name="Burkard T.R."/>
            <person name="Planyavsky M."/>
            <person name="Kaupe I."/>
            <person name="Breitwieser F.P."/>
            <person name="Buerckstuemmer T."/>
            <person name="Bennett K.L."/>
            <person name="Superti-Furga G."/>
            <person name="Colinge J."/>
        </authorList>
    </citation>
    <scope>IDENTIFICATION BY MASS SPECTROMETRY [LARGE SCALE ANALYSIS]</scope>
</reference>
<reference key="9">
    <citation type="journal article" date="2013" name="J. Proteome Res.">
        <title>Toward a comprehensive characterization of a human cancer cell phosphoproteome.</title>
        <authorList>
            <person name="Zhou H."/>
            <person name="Di Palma S."/>
            <person name="Preisinger C."/>
            <person name="Peng M."/>
            <person name="Polat A.N."/>
            <person name="Heck A.J."/>
            <person name="Mohammed S."/>
        </authorList>
    </citation>
    <scope>IDENTIFICATION BY MASS SPECTROMETRY [LARGE SCALE ANALYSIS]</scope>
    <source>
        <tissue>Erythroleukemia</tissue>
    </source>
</reference>
<comment type="function">
    <text evidence="3">Plays a role in promoting the proliferation of synovial fibroblasts in response to pro-inflammatory stimuli.</text>
</comment>
<comment type="subcellular location">
    <subcellularLocation>
        <location evidence="3">Nucleus</location>
    </subcellularLocation>
</comment>
<comment type="tissue specificity">
    <text evidence="3">Highly expressed in testis and ovary, and to a lesser extent in the lung, spleen and the heart (at protein level).</text>
</comment>
<comment type="similarity">
    <text evidence="5">Belongs to the SAAL1 family.</text>
</comment>
<gene>
    <name type="primary">SAAL1</name>
</gene>
<proteinExistence type="evidence at protein level"/>
<accession>Q96ER3</accession>
<accession>A6NH05</accession>
<dbReference type="EMBL" id="AC090099">
    <property type="status" value="NOT_ANNOTATED_CDS"/>
    <property type="molecule type" value="Genomic_DNA"/>
</dbReference>
<dbReference type="EMBL" id="CH471064">
    <property type="protein sequence ID" value="EAW68419.1"/>
    <property type="molecule type" value="Genomic_DNA"/>
</dbReference>
<dbReference type="EMBL" id="BC012010">
    <property type="protein sequence ID" value="AAH12010.1"/>
    <property type="molecule type" value="mRNA"/>
</dbReference>
<dbReference type="CCDS" id="CCDS31439.1"/>
<dbReference type="RefSeq" id="NP_612430.2">
    <property type="nucleotide sequence ID" value="NM_138421.3"/>
</dbReference>
<dbReference type="SMR" id="Q96ER3"/>
<dbReference type="BioGRID" id="125228">
    <property type="interactions" value="213"/>
</dbReference>
<dbReference type="FunCoup" id="Q96ER3">
    <property type="interactions" value="3433"/>
</dbReference>
<dbReference type="IntAct" id="Q96ER3">
    <property type="interactions" value="158"/>
</dbReference>
<dbReference type="MINT" id="Q96ER3"/>
<dbReference type="STRING" id="9606.ENSP00000432487"/>
<dbReference type="GlyGen" id="Q96ER3">
    <property type="glycosylation" value="1 site, 1 O-linked glycan (1 site)"/>
</dbReference>
<dbReference type="iPTMnet" id="Q96ER3"/>
<dbReference type="PhosphoSitePlus" id="Q96ER3"/>
<dbReference type="BioMuta" id="SAAL1"/>
<dbReference type="DMDM" id="209572677"/>
<dbReference type="CPTAC" id="CPTAC-5928"/>
<dbReference type="CPTAC" id="CPTAC-5929"/>
<dbReference type="jPOST" id="Q96ER3"/>
<dbReference type="MassIVE" id="Q96ER3"/>
<dbReference type="PaxDb" id="9606-ENSP00000432487"/>
<dbReference type="PeptideAtlas" id="Q96ER3"/>
<dbReference type="ProteomicsDB" id="76442"/>
<dbReference type="Pumba" id="Q96ER3"/>
<dbReference type="Antibodypedia" id="42486">
    <property type="antibodies" value="117 antibodies from 23 providers"/>
</dbReference>
<dbReference type="CPTC" id="Q96ER3">
    <property type="antibodies" value="1 antibody"/>
</dbReference>
<dbReference type="DNASU" id="113174"/>
<dbReference type="Ensembl" id="ENST00000524803.6">
    <property type="protein sequence ID" value="ENSP00000432487.1"/>
    <property type="gene ID" value="ENSG00000166788.10"/>
</dbReference>
<dbReference type="GeneID" id="113174"/>
<dbReference type="KEGG" id="hsa:113174"/>
<dbReference type="MANE-Select" id="ENST00000524803.6">
    <property type="protein sequence ID" value="ENSP00000432487.1"/>
    <property type="RefSeq nucleotide sequence ID" value="NM_138421.3"/>
    <property type="RefSeq protein sequence ID" value="NP_612430.2"/>
</dbReference>
<dbReference type="UCSC" id="uc001mnq.4">
    <property type="organism name" value="human"/>
</dbReference>
<dbReference type="AGR" id="HGNC:25158"/>
<dbReference type="CTD" id="113174"/>
<dbReference type="DisGeNET" id="113174"/>
<dbReference type="GeneCards" id="SAAL1"/>
<dbReference type="HGNC" id="HGNC:25158">
    <property type="gene designation" value="SAAL1"/>
</dbReference>
<dbReference type="HPA" id="ENSG00000166788">
    <property type="expression patterns" value="Low tissue specificity"/>
</dbReference>
<dbReference type="neXtProt" id="NX_Q96ER3"/>
<dbReference type="OpenTargets" id="ENSG00000166788"/>
<dbReference type="PharmGKB" id="PA142670959"/>
<dbReference type="VEuPathDB" id="HostDB:ENSG00000166788"/>
<dbReference type="eggNOG" id="ENOG502QS5W">
    <property type="taxonomic scope" value="Eukaryota"/>
</dbReference>
<dbReference type="GeneTree" id="ENSGT00390000004737"/>
<dbReference type="InParanoid" id="Q96ER3"/>
<dbReference type="OMA" id="NMFQELT"/>
<dbReference type="OrthoDB" id="2156856at2759"/>
<dbReference type="PAN-GO" id="Q96ER3">
    <property type="GO annotations" value="0 GO annotations based on evolutionary models"/>
</dbReference>
<dbReference type="PhylomeDB" id="Q96ER3"/>
<dbReference type="TreeFam" id="TF323873"/>
<dbReference type="PathwayCommons" id="Q96ER3"/>
<dbReference type="SignaLink" id="Q96ER3"/>
<dbReference type="SIGNOR" id="Q96ER3"/>
<dbReference type="BioGRID-ORCS" id="113174">
    <property type="hits" value="13 hits in 1166 CRISPR screens"/>
</dbReference>
<dbReference type="ChiTaRS" id="SAAL1">
    <property type="organism name" value="human"/>
</dbReference>
<dbReference type="GenomeRNAi" id="113174"/>
<dbReference type="Pharos" id="Q96ER3">
    <property type="development level" value="Tdark"/>
</dbReference>
<dbReference type="PRO" id="PR:Q96ER3"/>
<dbReference type="Proteomes" id="UP000005640">
    <property type="component" value="Chromosome 11"/>
</dbReference>
<dbReference type="RNAct" id="Q96ER3">
    <property type="molecule type" value="protein"/>
</dbReference>
<dbReference type="Bgee" id="ENSG00000166788">
    <property type="expression patterns" value="Expressed in primordial germ cell in gonad and 133 other cell types or tissues"/>
</dbReference>
<dbReference type="ExpressionAtlas" id="Q96ER3">
    <property type="expression patterns" value="baseline and differential"/>
</dbReference>
<dbReference type="GO" id="GO:0005654">
    <property type="term" value="C:nucleoplasm"/>
    <property type="evidence" value="ECO:0000314"/>
    <property type="project" value="HPA"/>
</dbReference>
<dbReference type="GO" id="GO:0005634">
    <property type="term" value="C:nucleus"/>
    <property type="evidence" value="ECO:0000314"/>
    <property type="project" value="FlyBase"/>
</dbReference>
<dbReference type="GO" id="GO:1901647">
    <property type="term" value="P:positive regulation of synoviocyte proliferation"/>
    <property type="evidence" value="ECO:0000315"/>
    <property type="project" value="FlyBase"/>
</dbReference>
<dbReference type="FunFam" id="1.25.10.10:FF:000298">
    <property type="entry name" value="Serum amyloid A like 1"/>
    <property type="match status" value="1"/>
</dbReference>
<dbReference type="Gene3D" id="1.25.10.10">
    <property type="entry name" value="Leucine-rich Repeat Variant"/>
    <property type="match status" value="1"/>
</dbReference>
<dbReference type="InterPro" id="IPR011989">
    <property type="entry name" value="ARM-like"/>
</dbReference>
<dbReference type="InterPro" id="IPR016024">
    <property type="entry name" value="ARM-type_fold"/>
</dbReference>
<dbReference type="InterPro" id="IPR052464">
    <property type="entry name" value="Synovial_Prolif_Regulator"/>
</dbReference>
<dbReference type="PANTHER" id="PTHR23424:SF23">
    <property type="entry name" value="PROTEIN SAAL1"/>
    <property type="match status" value="1"/>
</dbReference>
<dbReference type="PANTHER" id="PTHR23424">
    <property type="entry name" value="SERUM AMYLOID A"/>
    <property type="match status" value="1"/>
</dbReference>
<dbReference type="SUPFAM" id="SSF48371">
    <property type="entry name" value="ARM repeat"/>
    <property type="match status" value="1"/>
</dbReference>
<feature type="chain" id="PRO_0000279540" description="Protein SAAL1">
    <location>
        <begin position="1"/>
        <end position="474"/>
    </location>
</feature>
<feature type="region of interest" description="Disordered" evidence="2">
    <location>
        <begin position="1"/>
        <end position="21"/>
    </location>
</feature>
<feature type="compositionally biased region" description="Pro residues" evidence="2">
    <location>
        <begin position="1"/>
        <end position="10"/>
    </location>
</feature>
<feature type="modified residue" description="Phosphoserine" evidence="1">
    <location>
        <position position="6"/>
    </location>
</feature>
<feature type="modified residue" description="Phosphothreonine" evidence="6">
    <location>
        <position position="387"/>
    </location>
</feature>
<feature type="sequence variant" id="VAR_053846" description="In dbSNP:rs35525096.">
    <original>I</original>
    <variation>V</variation>
    <location>
        <position position="315"/>
    </location>
</feature>
<feature type="sequence variant" id="VAR_053847" description="In dbSNP:rs28930681.">
    <original>S</original>
    <variation>G</variation>
    <location>
        <position position="426"/>
    </location>
</feature>
<feature type="sequence conflict" description="In Ref. 3; AAH12010." evidence="5" ref="3">
    <original>P</original>
    <variation>PP</variation>
    <location>
        <position position="10"/>
    </location>
</feature>
<evidence type="ECO:0000250" key="1">
    <source>
        <dbReference type="UniProtKB" id="Q9D2C2"/>
    </source>
</evidence>
<evidence type="ECO:0000256" key="2">
    <source>
        <dbReference type="SAM" id="MobiDB-lite"/>
    </source>
</evidence>
<evidence type="ECO:0000269" key="3">
    <source>
    </source>
</evidence>
<evidence type="ECO:0000303" key="4">
    <source>
    </source>
</evidence>
<evidence type="ECO:0000305" key="5"/>
<evidence type="ECO:0007744" key="6">
    <source>
    </source>
</evidence>
<keyword id="KW-0539">Nucleus</keyword>
<keyword id="KW-0597">Phosphoprotein</keyword>
<keyword id="KW-1267">Proteomics identification</keyword>
<keyword id="KW-1185">Reference proteome</keyword>
<organism>
    <name type="scientific">Homo sapiens</name>
    <name type="common">Human</name>
    <dbReference type="NCBI Taxonomy" id="9606"/>
    <lineage>
        <taxon>Eukaryota</taxon>
        <taxon>Metazoa</taxon>
        <taxon>Chordata</taxon>
        <taxon>Craniata</taxon>
        <taxon>Vertebrata</taxon>
        <taxon>Euteleostomi</taxon>
        <taxon>Mammalia</taxon>
        <taxon>Eutheria</taxon>
        <taxon>Euarchontoglires</taxon>
        <taxon>Primates</taxon>
        <taxon>Haplorrhini</taxon>
        <taxon>Catarrhini</taxon>
        <taxon>Hominidae</taxon>
        <taxon>Homo</taxon>
    </lineage>
</organism>
<protein>
    <recommendedName>
        <fullName>Protein SAAL1</fullName>
    </recommendedName>
    <alternativeName>
        <fullName evidence="4">Synoviocyte proliferation-associated in collagen-induced arthritis protein 1</fullName>
        <shortName>SPACIA1</shortName>
    </alternativeName>
</protein>
<name>SAAL1_HUMAN</name>